<protein>
    <recommendedName>
        <fullName evidence="1">Large ribosomal subunit protein uL18</fullName>
    </recommendedName>
    <alternativeName>
        <fullName evidence="2">50S ribosomal protein L18</fullName>
    </alternativeName>
</protein>
<reference key="1">
    <citation type="submission" date="2004-12" db="EMBL/GenBank/DDBJ databases">
        <title>The genome sequence of Borrelia hermsii and Borrelia turicatae: comparative analysis of two agents of endemic N. America relapsing fever.</title>
        <authorList>
            <person name="Porcella S.F."/>
            <person name="Raffel S.J."/>
            <person name="Schrumpf M.E."/>
            <person name="Montgomery B."/>
            <person name="Smith T."/>
            <person name="Schwan T.G."/>
        </authorList>
    </citation>
    <scope>NUCLEOTIDE SEQUENCE [LARGE SCALE GENOMIC DNA]</scope>
    <source>
        <strain>HS1 / DAH</strain>
    </source>
</reference>
<dbReference type="EMBL" id="CP000048">
    <property type="protein sequence ID" value="AAX17003.1"/>
    <property type="molecule type" value="Genomic_DNA"/>
</dbReference>
<dbReference type="RefSeq" id="WP_012422256.1">
    <property type="nucleotide sequence ID" value="NZ_CP073136.1"/>
</dbReference>
<dbReference type="SMR" id="B2S0J7"/>
<dbReference type="GeneID" id="71843312"/>
<dbReference type="KEGG" id="bhr:BH0494"/>
<dbReference type="HOGENOM" id="CLU_098841_0_1_12"/>
<dbReference type="Proteomes" id="UP000008834">
    <property type="component" value="Chromosome"/>
</dbReference>
<dbReference type="GO" id="GO:0022625">
    <property type="term" value="C:cytosolic large ribosomal subunit"/>
    <property type="evidence" value="ECO:0007669"/>
    <property type="project" value="TreeGrafter"/>
</dbReference>
<dbReference type="GO" id="GO:0008097">
    <property type="term" value="F:5S rRNA binding"/>
    <property type="evidence" value="ECO:0007669"/>
    <property type="project" value="TreeGrafter"/>
</dbReference>
<dbReference type="GO" id="GO:0003735">
    <property type="term" value="F:structural constituent of ribosome"/>
    <property type="evidence" value="ECO:0007669"/>
    <property type="project" value="InterPro"/>
</dbReference>
<dbReference type="GO" id="GO:0006412">
    <property type="term" value="P:translation"/>
    <property type="evidence" value="ECO:0007669"/>
    <property type="project" value="UniProtKB-UniRule"/>
</dbReference>
<dbReference type="CDD" id="cd00432">
    <property type="entry name" value="Ribosomal_L18_L5e"/>
    <property type="match status" value="1"/>
</dbReference>
<dbReference type="FunFam" id="3.30.420.100:FF:000001">
    <property type="entry name" value="50S ribosomal protein L18"/>
    <property type="match status" value="1"/>
</dbReference>
<dbReference type="Gene3D" id="3.30.420.100">
    <property type="match status" value="1"/>
</dbReference>
<dbReference type="HAMAP" id="MF_01337_B">
    <property type="entry name" value="Ribosomal_uL18_B"/>
    <property type="match status" value="1"/>
</dbReference>
<dbReference type="InterPro" id="IPR004389">
    <property type="entry name" value="Ribosomal_uL18_bac-type"/>
</dbReference>
<dbReference type="InterPro" id="IPR005484">
    <property type="entry name" value="Ribosomal_uL18_bac/euk"/>
</dbReference>
<dbReference type="NCBIfam" id="TIGR00060">
    <property type="entry name" value="L18_bact"/>
    <property type="match status" value="1"/>
</dbReference>
<dbReference type="PANTHER" id="PTHR12899">
    <property type="entry name" value="39S RIBOSOMAL PROTEIN L18, MITOCHONDRIAL"/>
    <property type="match status" value="1"/>
</dbReference>
<dbReference type="PANTHER" id="PTHR12899:SF3">
    <property type="entry name" value="LARGE RIBOSOMAL SUBUNIT PROTEIN UL18M"/>
    <property type="match status" value="1"/>
</dbReference>
<dbReference type="Pfam" id="PF00861">
    <property type="entry name" value="Ribosomal_L18p"/>
    <property type="match status" value="1"/>
</dbReference>
<dbReference type="SUPFAM" id="SSF53137">
    <property type="entry name" value="Translational machinery components"/>
    <property type="match status" value="1"/>
</dbReference>
<comment type="function">
    <text evidence="1">This is one of the proteins that bind and probably mediate the attachment of the 5S RNA into the large ribosomal subunit, where it forms part of the central protuberance.</text>
</comment>
<comment type="subunit">
    <text evidence="1">Part of the 50S ribosomal subunit; part of the 5S rRNA/L5/L18/L25 subcomplex. Contacts the 5S and 23S rRNAs.</text>
</comment>
<comment type="similarity">
    <text evidence="1">Belongs to the universal ribosomal protein uL18 family.</text>
</comment>
<name>RL18_BORHD</name>
<proteinExistence type="inferred from homology"/>
<organism>
    <name type="scientific">Borrelia hermsii (strain HS1 / DAH)</name>
    <dbReference type="NCBI Taxonomy" id="314723"/>
    <lineage>
        <taxon>Bacteria</taxon>
        <taxon>Pseudomonadati</taxon>
        <taxon>Spirochaetota</taxon>
        <taxon>Spirochaetia</taxon>
        <taxon>Spirochaetales</taxon>
        <taxon>Borreliaceae</taxon>
        <taxon>Borrelia</taxon>
    </lineage>
</organism>
<gene>
    <name evidence="1" type="primary">rplR</name>
    <name type="ordered locus">BH0494</name>
</gene>
<feature type="chain" id="PRO_1000142625" description="Large ribosomal subunit protein uL18">
    <location>
        <begin position="1"/>
        <end position="119"/>
    </location>
</feature>
<accession>B2S0J7</accession>
<sequence>MKKVKEAEKRNIKRKKRIRDRIGFGVADRPRVTVFKSNKYFYVQVIDDMAGHTLASVSTIEKDLKLNKNIDDVKKLGEVLAKRLKDKNISRLIFDRNGYKYHGLIASFATSLREAGIDV</sequence>
<evidence type="ECO:0000255" key="1">
    <source>
        <dbReference type="HAMAP-Rule" id="MF_01337"/>
    </source>
</evidence>
<evidence type="ECO:0000305" key="2"/>
<keyword id="KW-0687">Ribonucleoprotein</keyword>
<keyword id="KW-0689">Ribosomal protein</keyword>
<keyword id="KW-0694">RNA-binding</keyword>
<keyword id="KW-0699">rRNA-binding</keyword>